<evidence type="ECO:0000255" key="1">
    <source>
        <dbReference type="HAMAP-Rule" id="MF_01528"/>
    </source>
</evidence>
<gene>
    <name evidence="1" type="primary">mdtG</name>
    <name type="ordered locus">PMI1687</name>
</gene>
<reference key="1">
    <citation type="journal article" date="2008" name="J. Bacteriol.">
        <title>Complete genome sequence of uropathogenic Proteus mirabilis, a master of both adherence and motility.</title>
        <authorList>
            <person name="Pearson M.M."/>
            <person name="Sebaihia M."/>
            <person name="Churcher C."/>
            <person name="Quail M.A."/>
            <person name="Seshasayee A.S."/>
            <person name="Luscombe N.M."/>
            <person name="Abdellah Z."/>
            <person name="Arrosmith C."/>
            <person name="Atkin B."/>
            <person name="Chillingworth T."/>
            <person name="Hauser H."/>
            <person name="Jagels K."/>
            <person name="Moule S."/>
            <person name="Mungall K."/>
            <person name="Norbertczak H."/>
            <person name="Rabbinowitsch E."/>
            <person name="Walker D."/>
            <person name="Whithead S."/>
            <person name="Thomson N.R."/>
            <person name="Rather P.N."/>
            <person name="Parkhill J."/>
            <person name="Mobley H.L.T."/>
        </authorList>
    </citation>
    <scope>NUCLEOTIDE SEQUENCE [LARGE SCALE GENOMIC DNA]</scope>
    <source>
        <strain>HI4320</strain>
    </source>
</reference>
<protein>
    <recommendedName>
        <fullName evidence="1">Multidrug resistance protein MdtG</fullName>
    </recommendedName>
</protein>
<proteinExistence type="inferred from homology"/>
<feature type="chain" id="PRO_0000414581" description="Multidrug resistance protein MdtG">
    <location>
        <begin position="1"/>
        <end position="402"/>
    </location>
</feature>
<feature type="transmembrane region" description="Helical" evidence="1">
    <location>
        <begin position="14"/>
        <end position="34"/>
    </location>
</feature>
<feature type="transmembrane region" description="Helical" evidence="1">
    <location>
        <begin position="52"/>
        <end position="72"/>
    </location>
</feature>
<feature type="transmembrane region" description="Helical" evidence="1">
    <location>
        <begin position="90"/>
        <end position="110"/>
    </location>
</feature>
<feature type="transmembrane region" description="Helical" evidence="1">
    <location>
        <begin position="113"/>
        <end position="133"/>
    </location>
</feature>
<feature type="transmembrane region" description="Helical" evidence="1">
    <location>
        <begin position="149"/>
        <end position="169"/>
    </location>
</feature>
<feature type="transmembrane region" description="Helical" evidence="1">
    <location>
        <begin position="171"/>
        <end position="191"/>
    </location>
</feature>
<feature type="transmembrane region" description="Helical" evidence="1">
    <location>
        <begin position="219"/>
        <end position="239"/>
    </location>
</feature>
<feature type="transmembrane region" description="Helical" evidence="1">
    <location>
        <begin position="254"/>
        <end position="274"/>
    </location>
</feature>
<feature type="transmembrane region" description="Helical" evidence="1">
    <location>
        <begin position="288"/>
        <end position="308"/>
    </location>
</feature>
<feature type="transmembrane region" description="Helical" evidence="1">
    <location>
        <begin position="318"/>
        <end position="338"/>
    </location>
</feature>
<feature type="transmembrane region" description="Helical" evidence="1">
    <location>
        <begin position="376"/>
        <end position="396"/>
    </location>
</feature>
<sequence>MNLKPRNNSWKQNLYIVWFGCFLTGAGFSLIMPFLPLYVEELGIKDHESLNLWTGVAFSITFLFSAIAAPFWGKLSDRKGRKLMLLRSALGMAIVMVLIGFAQNIWQLLILRALLGVLGGFVPNANALIATQVPVKKSGWALGTLSTGAVSGALIGPLIGGILADLYGLRPVFFITAAVLFICFIVTLFFVSENFTPVSKKDALSTQQVFSSLKNKRLVICLFFTTMIIQVATGSVTPILTLYIRDLAGSISNLAFISGVIASVPGIAALISAPRFGKLGDRIGPDKVLIFTLGLSIFMLIPMALVSNYWELGALRFLLGAVNAAMLPAVQTLILYNITPAIAGRIFSYNQALRDVGNVTGPLMGAFVAANYGFRAVFYFTAAVVFFNLIYSWISFRTPQRK</sequence>
<organism>
    <name type="scientific">Proteus mirabilis (strain HI4320)</name>
    <dbReference type="NCBI Taxonomy" id="529507"/>
    <lineage>
        <taxon>Bacteria</taxon>
        <taxon>Pseudomonadati</taxon>
        <taxon>Pseudomonadota</taxon>
        <taxon>Gammaproteobacteria</taxon>
        <taxon>Enterobacterales</taxon>
        <taxon>Morganellaceae</taxon>
        <taxon>Proteus</taxon>
    </lineage>
</organism>
<accession>B4EYY4</accession>
<name>MDTG_PROMH</name>
<dbReference type="EMBL" id="AM942759">
    <property type="protein sequence ID" value="CAR43519.1"/>
    <property type="molecule type" value="Genomic_DNA"/>
</dbReference>
<dbReference type="RefSeq" id="WP_012368071.1">
    <property type="nucleotide sequence ID" value="NC_010554.1"/>
</dbReference>
<dbReference type="SMR" id="B4EYY4"/>
<dbReference type="EnsemblBacteria" id="CAR43519">
    <property type="protein sequence ID" value="CAR43519"/>
    <property type="gene ID" value="PMI1687"/>
</dbReference>
<dbReference type="GeneID" id="6801162"/>
<dbReference type="KEGG" id="pmr:PMI1687"/>
<dbReference type="PATRIC" id="fig|529507.6.peg.1638"/>
<dbReference type="eggNOG" id="COG2814">
    <property type="taxonomic scope" value="Bacteria"/>
</dbReference>
<dbReference type="HOGENOM" id="CLU_001265_57_3_6"/>
<dbReference type="Proteomes" id="UP000008319">
    <property type="component" value="Chromosome"/>
</dbReference>
<dbReference type="GO" id="GO:0005886">
    <property type="term" value="C:plasma membrane"/>
    <property type="evidence" value="ECO:0007669"/>
    <property type="project" value="UniProtKB-SubCell"/>
</dbReference>
<dbReference type="GO" id="GO:0022857">
    <property type="term" value="F:transmembrane transporter activity"/>
    <property type="evidence" value="ECO:0007669"/>
    <property type="project" value="UniProtKB-UniRule"/>
</dbReference>
<dbReference type="CDD" id="cd17391">
    <property type="entry name" value="MFS_MdtG_MDR_like"/>
    <property type="match status" value="1"/>
</dbReference>
<dbReference type="FunFam" id="1.20.1250.20:FF:000022">
    <property type="entry name" value="Multidrug resistance protein MdtG"/>
    <property type="match status" value="1"/>
</dbReference>
<dbReference type="Gene3D" id="1.20.1250.20">
    <property type="entry name" value="MFS general substrate transporter like domains"/>
    <property type="match status" value="2"/>
</dbReference>
<dbReference type="HAMAP" id="MF_01528">
    <property type="entry name" value="MFS_MdtG"/>
    <property type="match status" value="1"/>
</dbReference>
<dbReference type="InterPro" id="IPR011701">
    <property type="entry name" value="MFS"/>
</dbReference>
<dbReference type="InterPro" id="IPR020846">
    <property type="entry name" value="MFS_dom"/>
</dbReference>
<dbReference type="InterPro" id="IPR050497">
    <property type="entry name" value="MFS_MdtG_subfamily"/>
</dbReference>
<dbReference type="InterPro" id="IPR036259">
    <property type="entry name" value="MFS_trans_sf"/>
</dbReference>
<dbReference type="InterPro" id="IPR023692">
    <property type="entry name" value="Mutidrug-R_MdtG"/>
</dbReference>
<dbReference type="InterPro" id="IPR001958">
    <property type="entry name" value="Tet-R_TetA/multi-R_MdtG-like"/>
</dbReference>
<dbReference type="NCBIfam" id="NF007372">
    <property type="entry name" value="PRK09874.1"/>
    <property type="match status" value="1"/>
</dbReference>
<dbReference type="PANTHER" id="PTHR43414">
    <property type="entry name" value="MULTIDRUG RESISTANCE PROTEIN MDTG"/>
    <property type="match status" value="1"/>
</dbReference>
<dbReference type="PANTHER" id="PTHR43414:SF6">
    <property type="entry name" value="MULTIDRUG RESISTANCE PROTEIN MDTG"/>
    <property type="match status" value="1"/>
</dbReference>
<dbReference type="Pfam" id="PF07690">
    <property type="entry name" value="MFS_1"/>
    <property type="match status" value="1"/>
</dbReference>
<dbReference type="PRINTS" id="PR01035">
    <property type="entry name" value="TCRTETA"/>
</dbReference>
<dbReference type="SUPFAM" id="SSF103473">
    <property type="entry name" value="MFS general substrate transporter"/>
    <property type="match status" value="1"/>
</dbReference>
<dbReference type="PROSITE" id="PS50850">
    <property type="entry name" value="MFS"/>
    <property type="match status" value="1"/>
</dbReference>
<keyword id="KW-0997">Cell inner membrane</keyword>
<keyword id="KW-1003">Cell membrane</keyword>
<keyword id="KW-0472">Membrane</keyword>
<keyword id="KW-1185">Reference proteome</keyword>
<keyword id="KW-0812">Transmembrane</keyword>
<keyword id="KW-1133">Transmembrane helix</keyword>
<keyword id="KW-0813">Transport</keyword>
<comment type="subcellular location">
    <subcellularLocation>
        <location evidence="1">Cell inner membrane</location>
        <topology evidence="1">Multi-pass membrane protein</topology>
    </subcellularLocation>
</comment>
<comment type="similarity">
    <text evidence="1">Belongs to the major facilitator superfamily. DHA1 family. MdtG (TC 2.A.1.2.20) subfamily.</text>
</comment>